<proteinExistence type="inferred from homology"/>
<name>M2_I07A0</name>
<sequence>LTEVETPIRNEWGCRCNDSSDPLVVAASIIGIVHLILWIIDRLFSKSIYRIFKHGLKRGPSTEGVPESMREEYREEQQNAVDADDDHFVSIELE</sequence>
<organismHost>
    <name type="scientific">Aves</name>
    <dbReference type="NCBI Taxonomy" id="8782"/>
</organismHost>
<organismHost>
    <name type="scientific">Homo sapiens</name>
    <name type="common">Human</name>
    <dbReference type="NCBI Taxonomy" id="9606"/>
</organismHost>
<organismHost>
    <name type="scientific">Sus scrofa</name>
    <name type="common">Pig</name>
    <dbReference type="NCBI Taxonomy" id="9823"/>
</organismHost>
<gene>
    <name evidence="1" type="primary">M</name>
    <name type="synonym">M2</name>
</gene>
<evidence type="ECO:0000255" key="1">
    <source>
        <dbReference type="HAMAP-Rule" id="MF_04069"/>
    </source>
</evidence>
<evidence type="ECO:0000256" key="2">
    <source>
        <dbReference type="SAM" id="MobiDB-lite"/>
    </source>
</evidence>
<accession>A8C8J5</accession>
<comment type="function">
    <text evidence="1">Forms a proton-selective ion channel that is necessary for the efficient release of the viral genome during virus entry. After attaching to the cell surface, the virion enters the cell by endocytosis. Acidification of the endosome triggers M2 ion channel activity. The influx of protons into virion interior is believed to disrupt interactions between the viral ribonucleoprotein (RNP), matrix protein 1 (M1), and lipid bilayers, thereby freeing the viral genome from interaction with viral proteins and enabling RNA segments to migrate to the host cell nucleus, where influenza virus RNA transcription and replication occur. Also plays a role in viral proteins secretory pathway. Elevates the intravesicular pH of normally acidic compartments, such as trans-Golgi network, preventing newly formed hemagglutinin from premature switching to the fusion-active conformation.</text>
</comment>
<comment type="activity regulation">
    <text>The M2 protein from most influenza A strains is inhibited by amantadine and rimantadine, resulting in viral uncoating incapacity. Emergence of amantadine-resistant variants is usually rapid.</text>
</comment>
<comment type="subunit">
    <text evidence="1">Homotetramer; composed of two disulfide-linked dimers held together by non-covalent interactions. May interact with matrix protein 1.</text>
</comment>
<comment type="subcellular location">
    <subcellularLocation>
        <location evidence="1">Virion membrane</location>
    </subcellularLocation>
    <subcellularLocation>
        <location evidence="1">Host apical cell membrane</location>
        <topology evidence="1">Single-pass type III membrane protein</topology>
    </subcellularLocation>
    <text evidence="1">Abundantly expressed at the apical plasma membrane in infected polarized epithelial cells, in close proximity to budding and assembled virions. Minor component of virions (only 16-20 molecules/virion).</text>
</comment>
<comment type="alternative products">
    <event type="alternative splicing"/>
    <isoform>
        <id>A8C8J5-1</id>
        <name>M2</name>
        <sequence type="displayed"/>
    </isoform>
    <isoform>
        <id>A8C8J6-1</id>
        <name>M1</name>
        <sequence type="external"/>
    </isoform>
    <text>Only the first 9 residues are shared by the 2 isoforms.</text>
</comment>
<comment type="domain">
    <text evidence="1">Cytoplasmic tail plays an important role in virion assembly and morphogenesis.</text>
</comment>
<comment type="miscellaneous">
    <text>When the channel is activated, one or more imidazole moieties of His-34 probably become bi-protonated.</text>
</comment>
<comment type="similarity">
    <text evidence="1">Belongs to the influenza viruses matrix protein M2 family.</text>
</comment>
<keyword id="KW-0025">Alternative splicing</keyword>
<keyword id="KW-1015">Disulfide bond</keyword>
<keyword id="KW-0325">Glycoprotein</keyword>
<keyword id="KW-1032">Host cell membrane</keyword>
<keyword id="KW-1043">Host membrane</keyword>
<keyword id="KW-0945">Host-virus interaction</keyword>
<keyword id="KW-0375">Hydrogen ion transport</keyword>
<keyword id="KW-1083">Inhibition of host autophagy by virus</keyword>
<keyword id="KW-0407">Ion channel</keyword>
<keyword id="KW-0406">Ion transport</keyword>
<keyword id="KW-0449">Lipoprotein</keyword>
<keyword id="KW-0472">Membrane</keyword>
<keyword id="KW-0564">Palmitate</keyword>
<keyword id="KW-0597">Phosphoprotein</keyword>
<keyword id="KW-0735">Signal-anchor</keyword>
<keyword id="KW-0812">Transmembrane</keyword>
<keyword id="KW-1133">Transmembrane helix</keyword>
<keyword id="KW-0813">Transport</keyword>
<keyword id="KW-1182">Viral ion channel</keyword>
<keyword id="KW-0946">Virion</keyword>
<dbReference type="EMBL" id="CY026212">
    <property type="protein sequence ID" value="ABV45928.1"/>
    <property type="molecule type" value="Viral_cRNA"/>
</dbReference>
<dbReference type="SMR" id="A8C8J5"/>
<dbReference type="GlyCosmos" id="A8C8J5">
    <property type="glycosylation" value="1 site, No reported glycans"/>
</dbReference>
<dbReference type="Proteomes" id="UP001395887">
    <property type="component" value="Genome"/>
</dbReference>
<dbReference type="GO" id="GO:0020002">
    <property type="term" value="C:host cell plasma membrane"/>
    <property type="evidence" value="ECO:0007669"/>
    <property type="project" value="UniProtKB-SubCell"/>
</dbReference>
<dbReference type="GO" id="GO:0016020">
    <property type="term" value="C:membrane"/>
    <property type="evidence" value="ECO:0007669"/>
    <property type="project" value="UniProtKB-KW"/>
</dbReference>
<dbReference type="GO" id="GO:0055036">
    <property type="term" value="C:virion membrane"/>
    <property type="evidence" value="ECO:0007669"/>
    <property type="project" value="UniProtKB-SubCell"/>
</dbReference>
<dbReference type="GO" id="GO:0015267">
    <property type="term" value="F:channel activity"/>
    <property type="evidence" value="ECO:0007669"/>
    <property type="project" value="UniProtKB-KW"/>
</dbReference>
<dbReference type="GO" id="GO:0015078">
    <property type="term" value="F:proton transmembrane transporter activity"/>
    <property type="evidence" value="ECO:0007669"/>
    <property type="project" value="InterPro"/>
</dbReference>
<dbReference type="GO" id="GO:0140321">
    <property type="term" value="P:symbiont-mediated suppression of host autophagy"/>
    <property type="evidence" value="ECO:0007669"/>
    <property type="project" value="UniProtKB-KW"/>
</dbReference>
<dbReference type="Gene3D" id="6.10.250.1640">
    <property type="match status" value="1"/>
</dbReference>
<dbReference type="HAMAP" id="MF_04069">
    <property type="entry name" value="INFV_M2"/>
    <property type="match status" value="1"/>
</dbReference>
<dbReference type="InterPro" id="IPR002089">
    <property type="entry name" value="Flu_M2"/>
</dbReference>
<dbReference type="Pfam" id="PF00599">
    <property type="entry name" value="Flu_M2"/>
    <property type="match status" value="1"/>
</dbReference>
<reference key="1">
    <citation type="submission" date="2007-09" db="EMBL/GenBank/DDBJ databases">
        <title>The NIAID influenza genome sequencing project.</title>
        <authorList>
            <person name="Spiro D."/>
            <person name="Sengamalay N."/>
            <person name="Boyne A."/>
            <person name="Bera J."/>
            <person name="Zaborsky J."/>
            <person name="Subbu V."/>
            <person name="Sparenborg J."/>
            <person name="Gallagher T."/>
            <person name="Overton L."/>
            <person name="Althoff R."/>
            <person name="Liu X."/>
            <person name="Ghedin E."/>
            <person name="Sitz J."/>
            <person name="Katzel D."/>
            <person name="Neupane R."/>
            <person name="Shumway M."/>
            <person name="Koo H."/>
            <person name="Edelman L."/>
            <person name="Menegus M."/>
            <person name="Mayer C."/>
            <person name="Dale S."/>
            <person name="Bao Y."/>
            <person name="Bolotov P."/>
            <person name="Dernovoy D."/>
            <person name="Kiryutin B."/>
            <person name="Lipman D.J."/>
            <person name="Tatusova T."/>
        </authorList>
    </citation>
    <scope>NUCLEOTIDE SEQUENCE [GENOMIC RNA]</scope>
</reference>
<reference key="2">
    <citation type="submission" date="2007-09" db="EMBL/GenBank/DDBJ databases">
        <authorList>
            <consortium name="The NIAID Influenza Genome Sequencing Consortium"/>
        </authorList>
    </citation>
    <scope>NUCLEOTIDE SEQUENCE [GENOMIC RNA]</scope>
</reference>
<feature type="chain" id="PRO_0000372917" description="Matrix protein 2">
    <location>
        <begin position="1" status="less than"/>
        <end position="94"/>
    </location>
</feature>
<feature type="topological domain" description="Virion surface" evidence="1">
    <location>
        <begin position="1"/>
        <end position="19"/>
    </location>
</feature>
<feature type="transmembrane region" description="Helical; Signal-anchor for type III membrane protein" evidence="1">
    <location>
        <begin position="20"/>
        <end position="40"/>
    </location>
</feature>
<feature type="topological domain" description="Intravirion" evidence="1">
    <location>
        <begin position="41"/>
        <end position="94"/>
    </location>
</feature>
<feature type="region of interest" description="Disordered" evidence="2">
    <location>
        <begin position="58"/>
        <end position="80"/>
    </location>
</feature>
<feature type="compositionally biased region" description="Basic and acidic residues" evidence="2">
    <location>
        <begin position="68"/>
        <end position="77"/>
    </location>
</feature>
<feature type="site" description="Essential for channel activity, possibly by being protonated during channel activation, and by forming the channel gate and the selective filter" evidence="1">
    <location>
        <position position="34"/>
    </location>
</feature>
<feature type="site" description="Seems to be involved in pH gating" evidence="1">
    <location>
        <position position="38"/>
    </location>
</feature>
<feature type="modified residue" description="Phosphoserine; by host" evidence="1">
    <location>
        <position position="61"/>
    </location>
</feature>
<feature type="modified residue" description="Phosphoserine; by host" evidence="1">
    <location>
        <position position="90"/>
    </location>
</feature>
<feature type="glycosylation site" description="N-linked (GlcNAc...) asparagine; by host" evidence="1">
    <location>
        <position position="17"/>
    </location>
</feature>
<feature type="disulfide bond" description="Interchain (with C-17)" evidence="1">
    <location>
        <position position="14"/>
    </location>
</feature>
<feature type="disulfide bond" description="Interchain (with C-19)" evidence="1">
    <location>
        <position position="16"/>
    </location>
</feature>
<feature type="non-terminal residue">
    <location>
        <position position="1"/>
    </location>
</feature>
<protein>
    <recommendedName>
        <fullName evidence="1">Matrix protein 2</fullName>
    </recommendedName>
    <alternativeName>
        <fullName evidence="1">Proton channel protein M2</fullName>
    </alternativeName>
</protein>
<organism>
    <name type="scientific">Influenza A virus (strain A/USA:Texas/UR06-0195/2007 H1N1)</name>
    <dbReference type="NCBI Taxonomy" id="455880"/>
    <lineage>
        <taxon>Viruses</taxon>
        <taxon>Riboviria</taxon>
        <taxon>Orthornavirae</taxon>
        <taxon>Negarnaviricota</taxon>
        <taxon>Polyploviricotina</taxon>
        <taxon>Insthoviricetes</taxon>
        <taxon>Articulavirales</taxon>
        <taxon>Orthomyxoviridae</taxon>
        <taxon>Alphainfluenzavirus</taxon>
        <taxon>Alphainfluenzavirus influenzae</taxon>
        <taxon>Influenza A virus</taxon>
    </lineage>
</organism>